<accession>A9GXK6</accession>
<evidence type="ECO:0000255" key="1">
    <source>
        <dbReference type="HAMAP-Rule" id="MF_00270"/>
    </source>
</evidence>
<evidence type="ECO:0000256" key="2">
    <source>
        <dbReference type="SAM" id="MobiDB-lite"/>
    </source>
</evidence>
<evidence type="ECO:0000305" key="3"/>
<protein>
    <recommendedName>
        <fullName evidence="1">Small ribosomal subunit protein bS18</fullName>
    </recommendedName>
    <alternativeName>
        <fullName evidence="3">30S ribosomal protein S18</fullName>
    </alternativeName>
</protein>
<proteinExistence type="inferred from homology"/>
<sequence length="106" mass="12025">MNGRNNDMGRNGGADYDDRDFGRTPDLNADAPGRRRTGRKRVCRYCADKALVIDYKDPQALKYFISERGKVVPRRISGNCARHQRKVTLSIKRARNIALLPFTVTA</sequence>
<dbReference type="EMBL" id="AM746676">
    <property type="protein sequence ID" value="CAN97107.1"/>
    <property type="molecule type" value="Genomic_DNA"/>
</dbReference>
<dbReference type="RefSeq" id="WP_012239546.1">
    <property type="nucleotide sequence ID" value="NC_010162.1"/>
</dbReference>
<dbReference type="SMR" id="A9GXK6"/>
<dbReference type="STRING" id="448385.sce6938"/>
<dbReference type="KEGG" id="scl:sce6938"/>
<dbReference type="eggNOG" id="COG0238">
    <property type="taxonomic scope" value="Bacteria"/>
</dbReference>
<dbReference type="HOGENOM" id="CLU_148710_0_2_7"/>
<dbReference type="OrthoDB" id="9812008at2"/>
<dbReference type="BioCyc" id="SCEL448385:SCE_RS35585-MONOMER"/>
<dbReference type="Proteomes" id="UP000002139">
    <property type="component" value="Chromosome"/>
</dbReference>
<dbReference type="GO" id="GO:0022627">
    <property type="term" value="C:cytosolic small ribosomal subunit"/>
    <property type="evidence" value="ECO:0007669"/>
    <property type="project" value="TreeGrafter"/>
</dbReference>
<dbReference type="GO" id="GO:0070181">
    <property type="term" value="F:small ribosomal subunit rRNA binding"/>
    <property type="evidence" value="ECO:0007669"/>
    <property type="project" value="TreeGrafter"/>
</dbReference>
<dbReference type="GO" id="GO:0003735">
    <property type="term" value="F:structural constituent of ribosome"/>
    <property type="evidence" value="ECO:0007669"/>
    <property type="project" value="InterPro"/>
</dbReference>
<dbReference type="GO" id="GO:0006412">
    <property type="term" value="P:translation"/>
    <property type="evidence" value="ECO:0007669"/>
    <property type="project" value="UniProtKB-UniRule"/>
</dbReference>
<dbReference type="Gene3D" id="4.10.640.10">
    <property type="entry name" value="Ribosomal protein S18"/>
    <property type="match status" value="1"/>
</dbReference>
<dbReference type="HAMAP" id="MF_00270">
    <property type="entry name" value="Ribosomal_bS18"/>
    <property type="match status" value="1"/>
</dbReference>
<dbReference type="InterPro" id="IPR001648">
    <property type="entry name" value="Ribosomal_bS18"/>
</dbReference>
<dbReference type="InterPro" id="IPR018275">
    <property type="entry name" value="Ribosomal_bS18_CS"/>
</dbReference>
<dbReference type="InterPro" id="IPR036870">
    <property type="entry name" value="Ribosomal_bS18_sf"/>
</dbReference>
<dbReference type="NCBIfam" id="TIGR00165">
    <property type="entry name" value="S18"/>
    <property type="match status" value="1"/>
</dbReference>
<dbReference type="PANTHER" id="PTHR13479">
    <property type="entry name" value="30S RIBOSOMAL PROTEIN S18"/>
    <property type="match status" value="1"/>
</dbReference>
<dbReference type="PANTHER" id="PTHR13479:SF40">
    <property type="entry name" value="SMALL RIBOSOMAL SUBUNIT PROTEIN BS18M"/>
    <property type="match status" value="1"/>
</dbReference>
<dbReference type="Pfam" id="PF01084">
    <property type="entry name" value="Ribosomal_S18"/>
    <property type="match status" value="1"/>
</dbReference>
<dbReference type="PRINTS" id="PR00974">
    <property type="entry name" value="RIBOSOMALS18"/>
</dbReference>
<dbReference type="SUPFAM" id="SSF46911">
    <property type="entry name" value="Ribosomal protein S18"/>
    <property type="match status" value="1"/>
</dbReference>
<dbReference type="PROSITE" id="PS00057">
    <property type="entry name" value="RIBOSOMAL_S18"/>
    <property type="match status" value="1"/>
</dbReference>
<gene>
    <name evidence="1" type="primary">rpsR</name>
    <name type="ordered locus">sce6938</name>
</gene>
<reference key="1">
    <citation type="journal article" date="2007" name="Nat. Biotechnol.">
        <title>Complete genome sequence of the myxobacterium Sorangium cellulosum.</title>
        <authorList>
            <person name="Schneiker S."/>
            <person name="Perlova O."/>
            <person name="Kaiser O."/>
            <person name="Gerth K."/>
            <person name="Alici A."/>
            <person name="Altmeyer M.O."/>
            <person name="Bartels D."/>
            <person name="Bekel T."/>
            <person name="Beyer S."/>
            <person name="Bode E."/>
            <person name="Bode H.B."/>
            <person name="Bolten C.J."/>
            <person name="Choudhuri J.V."/>
            <person name="Doss S."/>
            <person name="Elnakady Y.A."/>
            <person name="Frank B."/>
            <person name="Gaigalat L."/>
            <person name="Goesmann A."/>
            <person name="Groeger C."/>
            <person name="Gross F."/>
            <person name="Jelsbak L."/>
            <person name="Jelsbak L."/>
            <person name="Kalinowski J."/>
            <person name="Kegler C."/>
            <person name="Knauber T."/>
            <person name="Konietzny S."/>
            <person name="Kopp M."/>
            <person name="Krause L."/>
            <person name="Krug D."/>
            <person name="Linke B."/>
            <person name="Mahmud T."/>
            <person name="Martinez-Arias R."/>
            <person name="McHardy A.C."/>
            <person name="Merai M."/>
            <person name="Meyer F."/>
            <person name="Mormann S."/>
            <person name="Munoz-Dorado J."/>
            <person name="Perez J."/>
            <person name="Pradella S."/>
            <person name="Rachid S."/>
            <person name="Raddatz G."/>
            <person name="Rosenau F."/>
            <person name="Rueckert C."/>
            <person name="Sasse F."/>
            <person name="Scharfe M."/>
            <person name="Schuster S.C."/>
            <person name="Suen G."/>
            <person name="Treuner-Lange A."/>
            <person name="Velicer G.J."/>
            <person name="Vorholter F.-J."/>
            <person name="Weissman K.J."/>
            <person name="Welch R.D."/>
            <person name="Wenzel S.C."/>
            <person name="Whitworth D.E."/>
            <person name="Wilhelm S."/>
            <person name="Wittmann C."/>
            <person name="Bloecker H."/>
            <person name="Puehler A."/>
            <person name="Mueller R."/>
        </authorList>
    </citation>
    <scope>NUCLEOTIDE SEQUENCE [LARGE SCALE GENOMIC DNA]</scope>
    <source>
        <strain>So ce56</strain>
    </source>
</reference>
<organism>
    <name type="scientific">Sorangium cellulosum (strain So ce56)</name>
    <name type="common">Polyangium cellulosum (strain So ce56)</name>
    <dbReference type="NCBI Taxonomy" id="448385"/>
    <lineage>
        <taxon>Bacteria</taxon>
        <taxon>Pseudomonadati</taxon>
        <taxon>Myxococcota</taxon>
        <taxon>Polyangia</taxon>
        <taxon>Polyangiales</taxon>
        <taxon>Polyangiaceae</taxon>
        <taxon>Sorangium</taxon>
    </lineage>
</organism>
<keyword id="KW-1185">Reference proteome</keyword>
<keyword id="KW-0687">Ribonucleoprotein</keyword>
<keyword id="KW-0689">Ribosomal protein</keyword>
<keyword id="KW-0694">RNA-binding</keyword>
<keyword id="KW-0699">rRNA-binding</keyword>
<comment type="function">
    <text evidence="1">Binds as a heterodimer with protein bS6 to the central domain of the 16S rRNA, where it helps stabilize the platform of the 30S subunit.</text>
</comment>
<comment type="subunit">
    <text evidence="1">Part of the 30S ribosomal subunit. Forms a tight heterodimer with protein bS6.</text>
</comment>
<comment type="similarity">
    <text evidence="1">Belongs to the bacterial ribosomal protein bS18 family.</text>
</comment>
<feature type="chain" id="PRO_0000345547" description="Small ribosomal subunit protein bS18">
    <location>
        <begin position="1"/>
        <end position="106"/>
    </location>
</feature>
<feature type="region of interest" description="Disordered" evidence="2">
    <location>
        <begin position="1"/>
        <end position="39"/>
    </location>
</feature>
<name>RS18_SORC5</name>